<dbReference type="EMBL" id="U18813">
    <property type="protein sequence ID" value="AAB64607.1"/>
    <property type="molecule type" value="Genomic_DNA"/>
</dbReference>
<dbReference type="EMBL" id="AY692721">
    <property type="protein sequence ID" value="AAT92740.1"/>
    <property type="molecule type" value="Genomic_DNA"/>
</dbReference>
<dbReference type="EMBL" id="BK006939">
    <property type="protein sequence ID" value="DAA07730.1"/>
    <property type="molecule type" value="Genomic_DNA"/>
</dbReference>
<dbReference type="PIR" id="S50574">
    <property type="entry name" value="S50574"/>
</dbReference>
<dbReference type="RefSeq" id="NP_010994.3">
    <property type="nucleotide sequence ID" value="NM_001178962.3"/>
</dbReference>
<dbReference type="PDB" id="5VKY">
    <property type="method" value="X-ray"/>
    <property type="resolution" value="2.30 A"/>
    <property type="chains" value="A/B=2-126"/>
</dbReference>
<dbReference type="PDBsum" id="5VKY"/>
<dbReference type="SMR" id="P40045"/>
<dbReference type="BioGRID" id="36814">
    <property type="interactions" value="86"/>
</dbReference>
<dbReference type="ComplexPortal" id="CPX-3541">
    <property type="entry name" value="AIM21-TDA2 actin assembly regulator complex"/>
</dbReference>
<dbReference type="DIP" id="DIP-4134N"/>
<dbReference type="FunCoup" id="P40045">
    <property type="interactions" value="48"/>
</dbReference>
<dbReference type="IntAct" id="P40045">
    <property type="interactions" value="9"/>
</dbReference>
<dbReference type="MINT" id="P40045"/>
<dbReference type="STRING" id="4932.YER071C"/>
<dbReference type="iPTMnet" id="P40045"/>
<dbReference type="PaxDb" id="4932-YER071C"/>
<dbReference type="PeptideAtlas" id="P40045"/>
<dbReference type="EnsemblFungi" id="YER071C_mRNA">
    <property type="protein sequence ID" value="YER071C"/>
    <property type="gene ID" value="YER071C"/>
</dbReference>
<dbReference type="GeneID" id="856802"/>
<dbReference type="KEGG" id="sce:YER071C"/>
<dbReference type="AGR" id="SGD:S000000873"/>
<dbReference type="SGD" id="S000000873">
    <property type="gene designation" value="TDA2"/>
</dbReference>
<dbReference type="VEuPathDB" id="FungiDB:YER071C"/>
<dbReference type="eggNOG" id="ENOG502S7YH">
    <property type="taxonomic scope" value="Eukaryota"/>
</dbReference>
<dbReference type="HOGENOM" id="CLU_137494_1_0_1"/>
<dbReference type="InParanoid" id="P40045"/>
<dbReference type="OMA" id="TIIWISK"/>
<dbReference type="OrthoDB" id="10059120at2759"/>
<dbReference type="BioCyc" id="YEAST:G3O-30243-MONOMER"/>
<dbReference type="BioGRID-ORCS" id="856802">
    <property type="hits" value="0 hits in 10 CRISPR screens"/>
</dbReference>
<dbReference type="PRO" id="PR:P40045"/>
<dbReference type="Proteomes" id="UP000002311">
    <property type="component" value="Chromosome V"/>
</dbReference>
<dbReference type="RNAct" id="P40045">
    <property type="molecule type" value="protein"/>
</dbReference>
<dbReference type="GO" id="GO:0030479">
    <property type="term" value="C:actin cortical patch"/>
    <property type="evidence" value="ECO:0000314"/>
    <property type="project" value="SGD"/>
</dbReference>
<dbReference type="GO" id="GO:0110131">
    <property type="term" value="C:Aim21-Tda2 complex"/>
    <property type="evidence" value="ECO:0000353"/>
    <property type="project" value="SGD"/>
</dbReference>
<dbReference type="GO" id="GO:0005737">
    <property type="term" value="C:cytoplasm"/>
    <property type="evidence" value="ECO:0007005"/>
    <property type="project" value="SGD"/>
</dbReference>
<dbReference type="GO" id="GO:0043332">
    <property type="term" value="C:mating projection tip"/>
    <property type="evidence" value="ECO:0007005"/>
    <property type="project" value="SGD"/>
</dbReference>
<dbReference type="GO" id="GO:0030837">
    <property type="term" value="P:negative regulation of actin filament polymerization"/>
    <property type="evidence" value="ECO:0000353"/>
    <property type="project" value="SGD"/>
</dbReference>
<dbReference type="GO" id="GO:2000813">
    <property type="term" value="P:negative regulation of barbed-end actin filament capping"/>
    <property type="evidence" value="ECO:0000314"/>
    <property type="project" value="ComplexPortal"/>
</dbReference>
<dbReference type="CDD" id="cd21457">
    <property type="entry name" value="DLC-like_TDA2"/>
    <property type="match status" value="1"/>
</dbReference>
<dbReference type="Gene3D" id="3.30.1140.40">
    <property type="entry name" value="Tctex-1"/>
    <property type="match status" value="1"/>
</dbReference>
<dbReference type="InterPro" id="IPR038586">
    <property type="entry name" value="Tctex-1-like_sf"/>
</dbReference>
<keyword id="KW-0002">3D-structure</keyword>
<keyword id="KW-0007">Acetylation</keyword>
<keyword id="KW-0966">Cell projection</keyword>
<keyword id="KW-0963">Cytoplasm</keyword>
<keyword id="KW-1185">Reference proteome</keyword>
<accession>P40045</accession>
<accession>D3DLX6</accession>
<protein>
    <recommendedName>
        <fullName>Topoisomerase I damage affected protein 2</fullName>
    </recommendedName>
</protein>
<gene>
    <name type="primary">TDA2</name>
    <name type="ordered locus">YER071C</name>
</gene>
<sequence>MSMQIEIKDGRSDNSPLPERKLVTLIQESYDSLKDDNEINLSTESTSNLLIKLVLEKLEKHSSLYKYIASVTTLNIEGLNEENANFSLKNDIGASWESKKDGIFNYKLEDKNNNECYLITILWLHK</sequence>
<organism>
    <name type="scientific">Saccharomyces cerevisiae (strain ATCC 204508 / S288c)</name>
    <name type="common">Baker's yeast</name>
    <dbReference type="NCBI Taxonomy" id="559292"/>
    <lineage>
        <taxon>Eukaryota</taxon>
        <taxon>Fungi</taxon>
        <taxon>Dikarya</taxon>
        <taxon>Ascomycota</taxon>
        <taxon>Saccharomycotina</taxon>
        <taxon>Saccharomycetes</taxon>
        <taxon>Saccharomycetales</taxon>
        <taxon>Saccharomycetaceae</taxon>
        <taxon>Saccharomyces</taxon>
    </lineage>
</organism>
<feature type="initiator methionine" description="Removed" evidence="6">
    <location>
        <position position="1"/>
    </location>
</feature>
<feature type="chain" id="PRO_0000202634" description="Topoisomerase I damage affected protein 2">
    <location>
        <begin position="2"/>
        <end position="126"/>
    </location>
</feature>
<feature type="modified residue" description="N-acetylserine" evidence="6">
    <location>
        <position position="2"/>
    </location>
</feature>
<evidence type="ECO:0000269" key="1">
    <source>
    </source>
</evidence>
<evidence type="ECO:0000269" key="2">
    <source>
    </source>
</evidence>
<evidence type="ECO:0000269" key="3">
    <source>
    </source>
</evidence>
<evidence type="ECO:0000269" key="4">
    <source>
    </source>
</evidence>
<evidence type="ECO:0000305" key="5"/>
<evidence type="ECO:0007744" key="6">
    <source>
    </source>
</evidence>
<name>TDA2_YEAST</name>
<proteinExistence type="evidence at protein level"/>
<comment type="interaction">
    <interactant intactId="EBI-22573">
        <id>P40045</id>
    </interactant>
    <interactant intactId="EBI-25376">
        <id>P40563</id>
        <label>AIM21</label>
    </interactant>
    <organismsDiffer>false</organismsDiffer>
    <experiments>3</experiments>
</comment>
<comment type="subcellular location">
    <subcellularLocation>
        <location evidence="1">Cytoplasm</location>
    </subcellularLocation>
    <subcellularLocation>
        <location evidence="3">Cell projection</location>
    </subcellularLocation>
    <text evidence="3">Concentrates at cytoplasmic punctate structures and localizes at the mating projection tip.</text>
</comment>
<comment type="disruption phenotype">
    <text evidence="4">Leads to cell death when overexpressing the camptothecin mimetic TOP1-T(722)A mutant.</text>
</comment>
<comment type="miscellaneous">
    <text evidence="2">Present with 799 molecules/cell in log phase SD medium.</text>
</comment>
<comment type="similarity">
    <text evidence="5">Belongs to the TDA2 family.</text>
</comment>
<reference key="1">
    <citation type="journal article" date="1997" name="Nature">
        <title>The nucleotide sequence of Saccharomyces cerevisiae chromosome V.</title>
        <authorList>
            <person name="Dietrich F.S."/>
            <person name="Mulligan J.T."/>
            <person name="Hennessy K.M."/>
            <person name="Yelton M.A."/>
            <person name="Allen E."/>
            <person name="Araujo R."/>
            <person name="Aviles E."/>
            <person name="Berno A."/>
            <person name="Brennan T."/>
            <person name="Carpenter J."/>
            <person name="Chen E."/>
            <person name="Cherry J.M."/>
            <person name="Chung E."/>
            <person name="Duncan M."/>
            <person name="Guzman E."/>
            <person name="Hartzell G."/>
            <person name="Hunicke-Smith S."/>
            <person name="Hyman R.W."/>
            <person name="Kayser A."/>
            <person name="Komp C."/>
            <person name="Lashkari D."/>
            <person name="Lew H."/>
            <person name="Lin D."/>
            <person name="Mosedale D."/>
            <person name="Nakahara K."/>
            <person name="Namath A."/>
            <person name="Norgren R."/>
            <person name="Oefner P."/>
            <person name="Oh C."/>
            <person name="Petel F.X."/>
            <person name="Roberts D."/>
            <person name="Sehl P."/>
            <person name="Schramm S."/>
            <person name="Shogren T."/>
            <person name="Smith V."/>
            <person name="Taylor P."/>
            <person name="Wei Y."/>
            <person name="Botstein D."/>
            <person name="Davis R.W."/>
        </authorList>
    </citation>
    <scope>NUCLEOTIDE SEQUENCE [LARGE SCALE GENOMIC DNA]</scope>
    <source>
        <strain>ATCC 204508 / S288c</strain>
    </source>
</reference>
<reference key="2">
    <citation type="journal article" date="2014" name="G3 (Bethesda)">
        <title>The reference genome sequence of Saccharomyces cerevisiae: Then and now.</title>
        <authorList>
            <person name="Engel S.R."/>
            <person name="Dietrich F.S."/>
            <person name="Fisk D.G."/>
            <person name="Binkley G."/>
            <person name="Balakrishnan R."/>
            <person name="Costanzo M.C."/>
            <person name="Dwight S.S."/>
            <person name="Hitz B.C."/>
            <person name="Karra K."/>
            <person name="Nash R.S."/>
            <person name="Weng S."/>
            <person name="Wong E.D."/>
            <person name="Lloyd P."/>
            <person name="Skrzypek M.S."/>
            <person name="Miyasato S.R."/>
            <person name="Simison M."/>
            <person name="Cherry J.M."/>
        </authorList>
    </citation>
    <scope>GENOME REANNOTATION</scope>
    <source>
        <strain>ATCC 204508 / S288c</strain>
    </source>
</reference>
<reference key="3">
    <citation type="journal article" date="2007" name="Genome Res.">
        <title>Approaching a complete repository of sequence-verified protein-encoding clones for Saccharomyces cerevisiae.</title>
        <authorList>
            <person name="Hu Y."/>
            <person name="Rolfs A."/>
            <person name="Bhullar B."/>
            <person name="Murthy T.V.S."/>
            <person name="Zhu C."/>
            <person name="Berger M.F."/>
            <person name="Camargo A.A."/>
            <person name="Kelley F."/>
            <person name="McCarron S."/>
            <person name="Jepson D."/>
            <person name="Richardson A."/>
            <person name="Raphael J."/>
            <person name="Moreira D."/>
            <person name="Taycher E."/>
            <person name="Zuo D."/>
            <person name="Mohr S."/>
            <person name="Kane M.F."/>
            <person name="Williamson J."/>
            <person name="Simpson A.J.G."/>
            <person name="Bulyk M.L."/>
            <person name="Harlow E."/>
            <person name="Marsischky G."/>
            <person name="Kolodner R.D."/>
            <person name="LaBaer J."/>
        </authorList>
    </citation>
    <scope>NUCLEOTIDE SEQUENCE [GENOMIC DNA]</scope>
    <source>
        <strain>ATCC 204508 / S288c</strain>
    </source>
</reference>
<reference key="4">
    <citation type="journal article" date="2003" name="Nature">
        <title>Global analysis of protein localization in budding yeast.</title>
        <authorList>
            <person name="Huh W.-K."/>
            <person name="Falvo J.V."/>
            <person name="Gerke L.C."/>
            <person name="Carroll A.S."/>
            <person name="Howson R.W."/>
            <person name="Weissman J.S."/>
            <person name="O'Shea E.K."/>
        </authorList>
    </citation>
    <scope>SUBCELLULAR LOCATION [LARGE SCALE ANALYSIS]</scope>
</reference>
<reference key="5">
    <citation type="journal article" date="2003" name="Nature">
        <title>Global analysis of protein expression in yeast.</title>
        <authorList>
            <person name="Ghaemmaghami S."/>
            <person name="Huh W.-K."/>
            <person name="Bower K."/>
            <person name="Howson R.W."/>
            <person name="Belle A."/>
            <person name="Dephoure N."/>
            <person name="O'Shea E.K."/>
            <person name="Weissman J.S."/>
        </authorList>
    </citation>
    <scope>LEVEL OF PROTEIN EXPRESSION [LARGE SCALE ANALYSIS]</scope>
</reference>
<reference key="6">
    <citation type="journal article" date="2009" name="J. Proteome Res.">
        <title>Systematic definition of protein constituents along the major polarization axis reveals an adaptive reuse of the polarization machinery in pheromone-treated budding yeast.</title>
        <authorList>
            <person name="Narayanaswamy R."/>
            <person name="Moradi E.K."/>
            <person name="Niu W."/>
            <person name="Hart G.T."/>
            <person name="Davis M."/>
            <person name="McGary K.L."/>
            <person name="Ellington A.D."/>
            <person name="Marcotte E.M."/>
        </authorList>
    </citation>
    <scope>SUBCELLULAR LOCATION</scope>
</reference>
<reference key="7">
    <citation type="journal article" date="2011" name="Genome Res.">
        <title>Selective ploidy ablation, a high-throughput plasmid transfer protocol, identifies new genes affecting topoisomerase I-induced DNA damage.</title>
        <authorList>
            <person name="Reid R.J."/>
            <person name="Gonzalez-Barrera S."/>
            <person name="Sunjevaric I."/>
            <person name="Alvaro D."/>
            <person name="Ciccone S."/>
            <person name="Wagner M."/>
            <person name="Rothstein R."/>
        </authorList>
    </citation>
    <scope>DISRUPTION PHENOTYPE</scope>
</reference>
<reference key="8">
    <citation type="journal article" date="2012" name="Proc. Natl. Acad. Sci. U.S.A.">
        <title>N-terminal acetylome analyses and functional insights of the N-terminal acetyltransferase NatB.</title>
        <authorList>
            <person name="Van Damme P."/>
            <person name="Lasa M."/>
            <person name="Polevoda B."/>
            <person name="Gazquez C."/>
            <person name="Elosegui-Artola A."/>
            <person name="Kim D.S."/>
            <person name="De Juan-Pardo E."/>
            <person name="Demeyer K."/>
            <person name="Hole K."/>
            <person name="Larrea E."/>
            <person name="Timmerman E."/>
            <person name="Prieto J."/>
            <person name="Arnesen T."/>
            <person name="Sherman F."/>
            <person name="Gevaert K."/>
            <person name="Aldabe R."/>
        </authorList>
    </citation>
    <scope>ACETYLATION [LARGE SCALE ANALYSIS] AT SER-2</scope>
    <scope>CLEAVAGE OF INITIATOR METHIONINE [LARGE SCALE ANALYSIS]</scope>
    <scope>IDENTIFICATION BY MASS SPECTROMETRY [LARGE SCALE ANALYSIS]</scope>
</reference>